<protein>
    <recommendedName>
        <fullName evidence="1">Large ribosomal subunit protein bL12</fullName>
    </recommendedName>
    <alternativeName>
        <fullName evidence="2">50S ribosomal protein L7/L12</fullName>
    </alternativeName>
</protein>
<dbReference type="EMBL" id="CR954246">
    <property type="protein sequence ID" value="CAI85324.1"/>
    <property type="molecule type" value="Genomic_DNA"/>
</dbReference>
<dbReference type="SMR" id="Q3ILQ0"/>
<dbReference type="STRING" id="326442.PSHAa0221"/>
<dbReference type="KEGG" id="pha:PSHAa0221"/>
<dbReference type="PATRIC" id="fig|326442.8.peg.212"/>
<dbReference type="eggNOG" id="COG0222">
    <property type="taxonomic scope" value="Bacteria"/>
</dbReference>
<dbReference type="HOGENOM" id="CLU_086499_3_2_6"/>
<dbReference type="BioCyc" id="PHAL326442:PSHA_RS01090-MONOMER"/>
<dbReference type="Proteomes" id="UP000006843">
    <property type="component" value="Chromosome I"/>
</dbReference>
<dbReference type="GO" id="GO:0022625">
    <property type="term" value="C:cytosolic large ribosomal subunit"/>
    <property type="evidence" value="ECO:0007669"/>
    <property type="project" value="TreeGrafter"/>
</dbReference>
<dbReference type="GO" id="GO:0003729">
    <property type="term" value="F:mRNA binding"/>
    <property type="evidence" value="ECO:0007669"/>
    <property type="project" value="TreeGrafter"/>
</dbReference>
<dbReference type="GO" id="GO:0003735">
    <property type="term" value="F:structural constituent of ribosome"/>
    <property type="evidence" value="ECO:0007669"/>
    <property type="project" value="InterPro"/>
</dbReference>
<dbReference type="GO" id="GO:0006412">
    <property type="term" value="P:translation"/>
    <property type="evidence" value="ECO:0007669"/>
    <property type="project" value="UniProtKB-UniRule"/>
</dbReference>
<dbReference type="CDD" id="cd00387">
    <property type="entry name" value="Ribosomal_L7_L12"/>
    <property type="match status" value="1"/>
</dbReference>
<dbReference type="FunFam" id="3.30.1390.10:FF:000001">
    <property type="entry name" value="50S ribosomal protein L7/L12"/>
    <property type="match status" value="1"/>
</dbReference>
<dbReference type="Gene3D" id="3.30.1390.10">
    <property type="match status" value="1"/>
</dbReference>
<dbReference type="Gene3D" id="1.20.5.710">
    <property type="entry name" value="Single helix bin"/>
    <property type="match status" value="1"/>
</dbReference>
<dbReference type="HAMAP" id="MF_00368">
    <property type="entry name" value="Ribosomal_bL12"/>
    <property type="match status" value="1"/>
</dbReference>
<dbReference type="InterPro" id="IPR000206">
    <property type="entry name" value="Ribosomal_bL12"/>
</dbReference>
<dbReference type="InterPro" id="IPR013823">
    <property type="entry name" value="Ribosomal_bL12_C"/>
</dbReference>
<dbReference type="InterPro" id="IPR014719">
    <property type="entry name" value="Ribosomal_bL12_C/ClpS-like"/>
</dbReference>
<dbReference type="InterPro" id="IPR008932">
    <property type="entry name" value="Ribosomal_bL12_oligo"/>
</dbReference>
<dbReference type="InterPro" id="IPR036235">
    <property type="entry name" value="Ribosomal_bL12_oligo_N_sf"/>
</dbReference>
<dbReference type="NCBIfam" id="TIGR00855">
    <property type="entry name" value="L12"/>
    <property type="match status" value="1"/>
</dbReference>
<dbReference type="PANTHER" id="PTHR45987">
    <property type="entry name" value="39S RIBOSOMAL PROTEIN L12"/>
    <property type="match status" value="1"/>
</dbReference>
<dbReference type="PANTHER" id="PTHR45987:SF4">
    <property type="entry name" value="LARGE RIBOSOMAL SUBUNIT PROTEIN BL12M"/>
    <property type="match status" value="1"/>
</dbReference>
<dbReference type="Pfam" id="PF00542">
    <property type="entry name" value="Ribosomal_L12"/>
    <property type="match status" value="1"/>
</dbReference>
<dbReference type="Pfam" id="PF16320">
    <property type="entry name" value="Ribosomal_L12_N"/>
    <property type="match status" value="1"/>
</dbReference>
<dbReference type="SUPFAM" id="SSF54736">
    <property type="entry name" value="ClpS-like"/>
    <property type="match status" value="1"/>
</dbReference>
<dbReference type="SUPFAM" id="SSF48300">
    <property type="entry name" value="Ribosomal protein L7/12, oligomerisation (N-terminal) domain"/>
    <property type="match status" value="1"/>
</dbReference>
<evidence type="ECO:0000255" key="1">
    <source>
        <dbReference type="HAMAP-Rule" id="MF_00368"/>
    </source>
</evidence>
<evidence type="ECO:0000305" key="2"/>
<keyword id="KW-1185">Reference proteome</keyword>
<keyword id="KW-0687">Ribonucleoprotein</keyword>
<keyword id="KW-0689">Ribosomal protein</keyword>
<accession>Q3ILQ0</accession>
<feature type="chain" id="PRO_0000243471" description="Large ribosomal subunit protein bL12">
    <location>
        <begin position="1"/>
        <end position="120"/>
    </location>
</feature>
<organism>
    <name type="scientific">Pseudoalteromonas translucida (strain TAC 125)</name>
    <dbReference type="NCBI Taxonomy" id="326442"/>
    <lineage>
        <taxon>Bacteria</taxon>
        <taxon>Pseudomonadati</taxon>
        <taxon>Pseudomonadota</taxon>
        <taxon>Gammaproteobacteria</taxon>
        <taxon>Alteromonadales</taxon>
        <taxon>Pseudoalteromonadaceae</taxon>
        <taxon>Pseudoalteromonas</taxon>
    </lineage>
</organism>
<name>RL7_PSET1</name>
<reference key="1">
    <citation type="journal article" date="2005" name="Genome Res.">
        <title>Coping with cold: the genome of the versatile marine Antarctica bacterium Pseudoalteromonas haloplanktis TAC125.</title>
        <authorList>
            <person name="Medigue C."/>
            <person name="Krin E."/>
            <person name="Pascal G."/>
            <person name="Barbe V."/>
            <person name="Bernsel A."/>
            <person name="Bertin P.N."/>
            <person name="Cheung F."/>
            <person name="Cruveiller S."/>
            <person name="D'Amico S."/>
            <person name="Duilio A."/>
            <person name="Fang G."/>
            <person name="Feller G."/>
            <person name="Ho C."/>
            <person name="Mangenot S."/>
            <person name="Marino G."/>
            <person name="Nilsson J."/>
            <person name="Parrilli E."/>
            <person name="Rocha E.P.C."/>
            <person name="Rouy Z."/>
            <person name="Sekowska A."/>
            <person name="Tutino M.L."/>
            <person name="Vallenet D."/>
            <person name="von Heijne G."/>
            <person name="Danchin A."/>
        </authorList>
    </citation>
    <scope>NUCLEOTIDE SEQUENCE [LARGE SCALE GENOMIC DNA]</scope>
    <source>
        <strain>TAC 125</strain>
    </source>
</reference>
<comment type="function">
    <text evidence="1">Forms part of the ribosomal stalk which helps the ribosome interact with GTP-bound translation factors. Is thus essential for accurate translation.</text>
</comment>
<comment type="subunit">
    <text evidence="1">Homodimer. Part of the ribosomal stalk of the 50S ribosomal subunit. Forms a multimeric L10(L12)X complex, where L10 forms an elongated spine to which 2 to 4 L12 dimers bind in a sequential fashion. Binds GTP-bound translation factors.</text>
</comment>
<comment type="similarity">
    <text evidence="1">Belongs to the bacterial ribosomal protein bL12 family.</text>
</comment>
<gene>
    <name evidence="1" type="primary">rplL</name>
    <name type="ordered locus">PSHAa0221</name>
</gene>
<proteinExistence type="inferred from homology"/>
<sequence length="120" mass="12230">MSVSKDQILDAIAEMSVMDVVALIEAMEEKFGVTAAAGMVAGPAAEAVEEKTEFDVILTGAGANKVSAIKAVRSATGLGLKEAKALVEAAPTPVKEGISKEEAEALAKDLTEAGAEVEVK</sequence>